<gene>
    <name evidence="1" type="primary">atpG</name>
    <name type="ordered locus">Spea_4241</name>
</gene>
<keyword id="KW-0066">ATP synthesis</keyword>
<keyword id="KW-0997">Cell inner membrane</keyword>
<keyword id="KW-1003">Cell membrane</keyword>
<keyword id="KW-0139">CF(1)</keyword>
<keyword id="KW-0375">Hydrogen ion transport</keyword>
<keyword id="KW-0406">Ion transport</keyword>
<keyword id="KW-0472">Membrane</keyword>
<keyword id="KW-1185">Reference proteome</keyword>
<keyword id="KW-0813">Transport</keyword>
<protein>
    <recommendedName>
        <fullName evidence="1">ATP synthase gamma chain</fullName>
    </recommendedName>
    <alternativeName>
        <fullName evidence="1">ATP synthase F1 sector gamma subunit</fullName>
    </alternativeName>
    <alternativeName>
        <fullName evidence="1">F-ATPase gamma subunit</fullName>
    </alternativeName>
</protein>
<sequence>MANAKEIKTKIASVQNTQKITSAMEMVAASKMRKAQDRMAASRPYAENMRKVIGHVAQGSLEYKHPYLEVREAKRVGYIVVSTDRGLCGGLNVNLFKKVVADVKKQREAGAEVEFCTIGARSAQFFNSFGGQVSASASGLGDAPKLADLIGTVRVMLEAYNEGKLDRLYVVFNKFVNTMTQAPVIEQLLPLPKSEDDEFTHQWDYIYEPDPKLLLDTLLVRFVESQVYQGVVENIASEQAARMVAMKAATDNAGELIGDLQLVYNKARQAAITQELSEIVSGAAAV</sequence>
<proteinExistence type="inferred from homology"/>
<comment type="function">
    <text evidence="1">Produces ATP from ADP in the presence of a proton gradient across the membrane. The gamma chain is believed to be important in regulating ATPase activity and the flow of protons through the CF(0) complex.</text>
</comment>
<comment type="subunit">
    <text evidence="1">F-type ATPases have 2 components, CF(1) - the catalytic core - and CF(0) - the membrane proton channel. CF(1) has five subunits: alpha(3), beta(3), gamma(1), delta(1), epsilon(1). CF(0) has three main subunits: a, b and c.</text>
</comment>
<comment type="subcellular location">
    <subcellularLocation>
        <location evidence="1">Cell inner membrane</location>
        <topology evidence="1">Peripheral membrane protein</topology>
    </subcellularLocation>
</comment>
<comment type="similarity">
    <text evidence="1">Belongs to the ATPase gamma chain family.</text>
</comment>
<name>ATPG_SHEPA</name>
<accession>A8HAG4</accession>
<reference key="1">
    <citation type="submission" date="2007-10" db="EMBL/GenBank/DDBJ databases">
        <title>Complete sequence of Shewanella pealeana ATCC 700345.</title>
        <authorList>
            <consortium name="US DOE Joint Genome Institute"/>
            <person name="Copeland A."/>
            <person name="Lucas S."/>
            <person name="Lapidus A."/>
            <person name="Barry K."/>
            <person name="Glavina del Rio T."/>
            <person name="Dalin E."/>
            <person name="Tice H."/>
            <person name="Pitluck S."/>
            <person name="Chertkov O."/>
            <person name="Brettin T."/>
            <person name="Bruce D."/>
            <person name="Detter J.C."/>
            <person name="Han C."/>
            <person name="Schmutz J."/>
            <person name="Larimer F."/>
            <person name="Land M."/>
            <person name="Hauser L."/>
            <person name="Kyrpides N."/>
            <person name="Kim E."/>
            <person name="Zhao J.-S.Z."/>
            <person name="Manno D."/>
            <person name="Hawari J."/>
            <person name="Richardson P."/>
        </authorList>
    </citation>
    <scope>NUCLEOTIDE SEQUENCE [LARGE SCALE GENOMIC DNA]</scope>
    <source>
        <strain>ATCC 700345 / ANG-SQ1</strain>
    </source>
</reference>
<feature type="chain" id="PRO_1000083810" description="ATP synthase gamma chain">
    <location>
        <begin position="1"/>
        <end position="286"/>
    </location>
</feature>
<evidence type="ECO:0000255" key="1">
    <source>
        <dbReference type="HAMAP-Rule" id="MF_00815"/>
    </source>
</evidence>
<dbReference type="EMBL" id="CP000851">
    <property type="protein sequence ID" value="ABV89551.1"/>
    <property type="molecule type" value="Genomic_DNA"/>
</dbReference>
<dbReference type="RefSeq" id="WP_012157428.1">
    <property type="nucleotide sequence ID" value="NC_009901.1"/>
</dbReference>
<dbReference type="SMR" id="A8HAG4"/>
<dbReference type="STRING" id="398579.Spea_4241"/>
<dbReference type="KEGG" id="spl:Spea_4241"/>
<dbReference type="eggNOG" id="COG0224">
    <property type="taxonomic scope" value="Bacteria"/>
</dbReference>
<dbReference type="HOGENOM" id="CLU_050669_0_1_6"/>
<dbReference type="OrthoDB" id="9812769at2"/>
<dbReference type="Proteomes" id="UP000002608">
    <property type="component" value="Chromosome"/>
</dbReference>
<dbReference type="GO" id="GO:0005886">
    <property type="term" value="C:plasma membrane"/>
    <property type="evidence" value="ECO:0007669"/>
    <property type="project" value="UniProtKB-SubCell"/>
</dbReference>
<dbReference type="GO" id="GO:0045259">
    <property type="term" value="C:proton-transporting ATP synthase complex"/>
    <property type="evidence" value="ECO:0007669"/>
    <property type="project" value="UniProtKB-KW"/>
</dbReference>
<dbReference type="GO" id="GO:0005524">
    <property type="term" value="F:ATP binding"/>
    <property type="evidence" value="ECO:0007669"/>
    <property type="project" value="UniProtKB-UniRule"/>
</dbReference>
<dbReference type="GO" id="GO:0046933">
    <property type="term" value="F:proton-transporting ATP synthase activity, rotational mechanism"/>
    <property type="evidence" value="ECO:0007669"/>
    <property type="project" value="UniProtKB-UniRule"/>
</dbReference>
<dbReference type="GO" id="GO:0042777">
    <property type="term" value="P:proton motive force-driven plasma membrane ATP synthesis"/>
    <property type="evidence" value="ECO:0007669"/>
    <property type="project" value="UniProtKB-UniRule"/>
</dbReference>
<dbReference type="CDD" id="cd12151">
    <property type="entry name" value="F1-ATPase_gamma"/>
    <property type="match status" value="1"/>
</dbReference>
<dbReference type="FunFam" id="1.10.287.80:FF:000005">
    <property type="entry name" value="ATP synthase gamma chain"/>
    <property type="match status" value="2"/>
</dbReference>
<dbReference type="FunFam" id="3.40.1380.10:FF:000001">
    <property type="entry name" value="ATP synthase gamma chain"/>
    <property type="match status" value="1"/>
</dbReference>
<dbReference type="Gene3D" id="3.40.1380.10">
    <property type="match status" value="1"/>
</dbReference>
<dbReference type="Gene3D" id="1.10.287.80">
    <property type="entry name" value="ATP synthase, gamma subunit, helix hairpin domain"/>
    <property type="match status" value="2"/>
</dbReference>
<dbReference type="HAMAP" id="MF_00815">
    <property type="entry name" value="ATP_synth_gamma_bact"/>
    <property type="match status" value="1"/>
</dbReference>
<dbReference type="InterPro" id="IPR035968">
    <property type="entry name" value="ATP_synth_F1_ATPase_gsu"/>
</dbReference>
<dbReference type="InterPro" id="IPR000131">
    <property type="entry name" value="ATP_synth_F1_gsu"/>
</dbReference>
<dbReference type="InterPro" id="IPR023632">
    <property type="entry name" value="ATP_synth_F1_gsu_CS"/>
</dbReference>
<dbReference type="NCBIfam" id="TIGR01146">
    <property type="entry name" value="ATPsyn_F1gamma"/>
    <property type="match status" value="1"/>
</dbReference>
<dbReference type="NCBIfam" id="NF004144">
    <property type="entry name" value="PRK05621.1-1"/>
    <property type="match status" value="1"/>
</dbReference>
<dbReference type="PANTHER" id="PTHR11693">
    <property type="entry name" value="ATP SYNTHASE GAMMA CHAIN"/>
    <property type="match status" value="1"/>
</dbReference>
<dbReference type="PANTHER" id="PTHR11693:SF22">
    <property type="entry name" value="ATP SYNTHASE SUBUNIT GAMMA, MITOCHONDRIAL"/>
    <property type="match status" value="1"/>
</dbReference>
<dbReference type="Pfam" id="PF00231">
    <property type="entry name" value="ATP-synt"/>
    <property type="match status" value="1"/>
</dbReference>
<dbReference type="PRINTS" id="PR00126">
    <property type="entry name" value="ATPASEGAMMA"/>
</dbReference>
<dbReference type="SUPFAM" id="SSF52943">
    <property type="entry name" value="ATP synthase (F1-ATPase), gamma subunit"/>
    <property type="match status" value="1"/>
</dbReference>
<dbReference type="PROSITE" id="PS00153">
    <property type="entry name" value="ATPASE_GAMMA"/>
    <property type="match status" value="1"/>
</dbReference>
<organism>
    <name type="scientific">Shewanella pealeana (strain ATCC 700345 / ANG-SQ1)</name>
    <dbReference type="NCBI Taxonomy" id="398579"/>
    <lineage>
        <taxon>Bacteria</taxon>
        <taxon>Pseudomonadati</taxon>
        <taxon>Pseudomonadota</taxon>
        <taxon>Gammaproteobacteria</taxon>
        <taxon>Alteromonadales</taxon>
        <taxon>Shewanellaceae</taxon>
        <taxon>Shewanella</taxon>
    </lineage>
</organism>